<gene>
    <name type="primary">OR13C3</name>
</gene>
<sequence>MIVQLICTVCFLAVNTFHVRSSFDFLKADDMGEINQTLVSEFLLLGLSGYPKIEIVYFALILVMYLVILIGNGVLIIASIFDSHFHTPMYFFLGNLSFLDICYTSSSVPSTLVSLISKKRNISFSGCAVQMFFGFAMGSTECLLLGMMAFDRYVAICNPLRYPIILSKVAYVLMASVSWLSGGINSAVQTLLAMRLPFCGNNIINHFACEILAVLKLACADISLNIITMVISNMAFLVLPLMVIFFSYMFILYTILQMNSATGRRKAFSTCSAHLTVVIIFYGTIFFMYAKPKSQDLIGEEKLQALDKLISLFYGVVTPMLNPILYSLRNKDVKAAVKYLLNKKPIH</sequence>
<feature type="chain" id="PRO_0000150732" description="Olfactory receptor 13C3">
    <location>
        <begin position="1"/>
        <end position="347"/>
    </location>
</feature>
<feature type="topological domain" description="Extracellular" evidence="1">
    <location>
        <begin position="1"/>
        <end position="55"/>
    </location>
</feature>
<feature type="transmembrane region" description="Helical; Name=1" evidence="1">
    <location>
        <begin position="56"/>
        <end position="76"/>
    </location>
</feature>
<feature type="topological domain" description="Cytoplasmic" evidence="1">
    <location>
        <begin position="77"/>
        <end position="84"/>
    </location>
</feature>
<feature type="transmembrane region" description="Helical; Name=2" evidence="1">
    <location>
        <begin position="85"/>
        <end position="105"/>
    </location>
</feature>
<feature type="topological domain" description="Extracellular" evidence="1">
    <location>
        <begin position="106"/>
        <end position="129"/>
    </location>
</feature>
<feature type="transmembrane region" description="Helical; Name=3" evidence="1">
    <location>
        <begin position="130"/>
        <end position="150"/>
    </location>
</feature>
<feature type="topological domain" description="Cytoplasmic" evidence="1">
    <location>
        <begin position="151"/>
        <end position="169"/>
    </location>
</feature>
<feature type="transmembrane region" description="Helical; Name=4" evidence="1">
    <location>
        <begin position="170"/>
        <end position="190"/>
    </location>
</feature>
<feature type="topological domain" description="Extracellular" evidence="1">
    <location>
        <begin position="191"/>
        <end position="227"/>
    </location>
</feature>
<feature type="transmembrane region" description="Helical; Name=5" evidence="1">
    <location>
        <begin position="228"/>
        <end position="247"/>
    </location>
</feature>
<feature type="topological domain" description="Cytoplasmic" evidence="1">
    <location>
        <begin position="248"/>
        <end position="267"/>
    </location>
</feature>
<feature type="transmembrane region" description="Helical; Name=6" evidence="1">
    <location>
        <begin position="268"/>
        <end position="288"/>
    </location>
</feature>
<feature type="topological domain" description="Extracellular" evidence="1">
    <location>
        <begin position="289"/>
        <end position="307"/>
    </location>
</feature>
<feature type="transmembrane region" description="Helical; Name=7" evidence="1">
    <location>
        <begin position="308"/>
        <end position="328"/>
    </location>
</feature>
<feature type="topological domain" description="Cytoplasmic" evidence="1">
    <location>
        <begin position="329"/>
        <end position="347"/>
    </location>
</feature>
<feature type="glycosylation site" description="N-linked (GlcNAc...) asparagine" evidence="1">
    <location>
        <position position="35"/>
    </location>
</feature>
<feature type="disulfide bond" evidence="2">
    <location>
        <begin position="127"/>
        <end position="219"/>
    </location>
</feature>
<feature type="sequence variant" id="VAR_024131" description="In dbSNP:rs10512330.">
    <original>K</original>
    <variation>T</variation>
    <location>
        <position position="293"/>
    </location>
</feature>
<organism>
    <name type="scientific">Homo sapiens</name>
    <name type="common">Human</name>
    <dbReference type="NCBI Taxonomy" id="9606"/>
    <lineage>
        <taxon>Eukaryota</taxon>
        <taxon>Metazoa</taxon>
        <taxon>Chordata</taxon>
        <taxon>Craniata</taxon>
        <taxon>Vertebrata</taxon>
        <taxon>Euteleostomi</taxon>
        <taxon>Mammalia</taxon>
        <taxon>Eutheria</taxon>
        <taxon>Euarchontoglires</taxon>
        <taxon>Primates</taxon>
        <taxon>Haplorrhini</taxon>
        <taxon>Catarrhini</taxon>
        <taxon>Hominidae</taxon>
        <taxon>Homo</taxon>
    </lineage>
</organism>
<accession>Q8NGS6</accession>
<accession>Q5VVG1</accession>
<accession>Q6IF52</accession>
<protein>
    <recommendedName>
        <fullName>Olfactory receptor 13C3</fullName>
    </recommendedName>
    <alternativeName>
        <fullName>Olfactory receptor OR9-8</fullName>
    </alternativeName>
</protein>
<name>O13C3_HUMAN</name>
<comment type="function">
    <text evidence="3">Odorant receptor.</text>
</comment>
<comment type="subcellular location">
    <subcellularLocation>
        <location>Cell membrane</location>
        <topology>Multi-pass membrane protein</topology>
    </subcellularLocation>
</comment>
<comment type="similarity">
    <text evidence="2">Belongs to the G-protein coupled receptor 1 family.</text>
</comment>
<comment type="caution">
    <text evidence="3">It is uncertain whether Met-1 or Met-31 is the initiator.</text>
</comment>
<comment type="sequence caution" evidence="3">
    <conflict type="erroneous initiation">
        <sequence resource="EMBL-CDS" id="BAC05934"/>
    </conflict>
</comment>
<comment type="online information" name="Human Olfactory Receptor Data Exploratorium (HORDE)">
    <link uri="http://genome.weizmann.ac.il/horde/card/index/symbol:OR13C3"/>
</comment>
<dbReference type="EMBL" id="AB065713">
    <property type="protein sequence ID" value="BAC05934.1"/>
    <property type="status" value="ALT_INIT"/>
    <property type="molecule type" value="Genomic_DNA"/>
</dbReference>
<dbReference type="EMBL" id="AL450426">
    <property type="status" value="NOT_ANNOTATED_CDS"/>
    <property type="molecule type" value="Genomic_DNA"/>
</dbReference>
<dbReference type="EMBL" id="BC136949">
    <property type="protein sequence ID" value="AAI36950.1"/>
    <property type="molecule type" value="mRNA"/>
</dbReference>
<dbReference type="EMBL" id="BC136952">
    <property type="protein sequence ID" value="AAI36953.1"/>
    <property type="molecule type" value="mRNA"/>
</dbReference>
<dbReference type="EMBL" id="BK004410">
    <property type="protein sequence ID" value="DAA04808.1"/>
    <property type="molecule type" value="Genomic_DNA"/>
</dbReference>
<dbReference type="RefSeq" id="NP_001001961.1">
    <property type="nucleotide sequence ID" value="NM_001001961.1"/>
</dbReference>
<dbReference type="SMR" id="Q8NGS6"/>
<dbReference type="BioGRID" id="126524">
    <property type="interactions" value="42"/>
</dbReference>
<dbReference type="FunCoup" id="Q8NGS6">
    <property type="interactions" value="470"/>
</dbReference>
<dbReference type="IntAct" id="Q8NGS6">
    <property type="interactions" value="34"/>
</dbReference>
<dbReference type="STRING" id="9606.ENSP00000363913"/>
<dbReference type="GlyCosmos" id="Q8NGS6">
    <property type="glycosylation" value="1 site, No reported glycans"/>
</dbReference>
<dbReference type="GlyGen" id="Q8NGS6">
    <property type="glycosylation" value="1 site"/>
</dbReference>
<dbReference type="iPTMnet" id="Q8NGS6"/>
<dbReference type="PhosphoSitePlus" id="Q8NGS6"/>
<dbReference type="BioMuta" id="OR13C3"/>
<dbReference type="DMDM" id="218511724"/>
<dbReference type="MassIVE" id="Q8NGS6"/>
<dbReference type="PaxDb" id="9606-ENSP00000363913"/>
<dbReference type="Antibodypedia" id="54613">
    <property type="antibodies" value="45 antibodies from 18 providers"/>
</dbReference>
<dbReference type="DNASU" id="138803"/>
<dbReference type="GeneID" id="138803"/>
<dbReference type="KEGG" id="hsa:138803"/>
<dbReference type="UCSC" id="uc004bcb.2">
    <property type="organism name" value="human"/>
</dbReference>
<dbReference type="AGR" id="HGNC:14704"/>
<dbReference type="CTD" id="138803"/>
<dbReference type="GeneCards" id="OR13C3"/>
<dbReference type="HGNC" id="HGNC:14704">
    <property type="gene designation" value="OR13C3"/>
</dbReference>
<dbReference type="neXtProt" id="NX_Q8NGS6"/>
<dbReference type="PharmGKB" id="PA32033"/>
<dbReference type="VEuPathDB" id="HostDB:ENSG00000204246"/>
<dbReference type="eggNOG" id="ENOG502R7ES">
    <property type="taxonomic scope" value="Eukaryota"/>
</dbReference>
<dbReference type="HOGENOM" id="CLU_012526_1_2_1"/>
<dbReference type="InParanoid" id="Q8NGS6"/>
<dbReference type="OrthoDB" id="6144223at2759"/>
<dbReference type="PAN-GO" id="Q8NGS6">
    <property type="GO annotations" value="0 GO annotations based on evolutionary models"/>
</dbReference>
<dbReference type="PhylomeDB" id="Q8NGS6"/>
<dbReference type="TreeFam" id="TF352686"/>
<dbReference type="PathwayCommons" id="Q8NGS6"/>
<dbReference type="Reactome" id="R-HSA-381753">
    <property type="pathway name" value="Olfactory Signaling Pathway"/>
</dbReference>
<dbReference type="Reactome" id="R-HSA-9752946">
    <property type="pathway name" value="Expression and translocation of olfactory receptors"/>
</dbReference>
<dbReference type="BioGRID-ORCS" id="138803">
    <property type="hits" value="6 hits in 735 CRISPR screens"/>
</dbReference>
<dbReference type="GeneWiki" id="OR13C3"/>
<dbReference type="GenomeRNAi" id="138803"/>
<dbReference type="Pharos" id="Q8NGS6">
    <property type="development level" value="Tdark"/>
</dbReference>
<dbReference type="PRO" id="PR:Q8NGS6"/>
<dbReference type="Proteomes" id="UP000005640">
    <property type="component" value="Chromosome 9"/>
</dbReference>
<dbReference type="RNAct" id="Q8NGS6">
    <property type="molecule type" value="protein"/>
</dbReference>
<dbReference type="GO" id="GO:0005886">
    <property type="term" value="C:plasma membrane"/>
    <property type="evidence" value="ECO:0000318"/>
    <property type="project" value="GO_Central"/>
</dbReference>
<dbReference type="GO" id="GO:0004930">
    <property type="term" value="F:G protein-coupled receptor activity"/>
    <property type="evidence" value="ECO:0007669"/>
    <property type="project" value="UniProtKB-KW"/>
</dbReference>
<dbReference type="GO" id="GO:0004984">
    <property type="term" value="F:olfactory receptor activity"/>
    <property type="evidence" value="ECO:0000318"/>
    <property type="project" value="GO_Central"/>
</dbReference>
<dbReference type="GO" id="GO:0050911">
    <property type="term" value="P:detection of chemical stimulus involved in sensory perception of smell"/>
    <property type="evidence" value="ECO:0000318"/>
    <property type="project" value="GO_Central"/>
</dbReference>
<dbReference type="CDD" id="cd15430">
    <property type="entry name" value="7tmA_OR13-like"/>
    <property type="match status" value="1"/>
</dbReference>
<dbReference type="FunFam" id="1.20.1070.10:FF:000501">
    <property type="entry name" value="Olfactory receptor"/>
    <property type="match status" value="1"/>
</dbReference>
<dbReference type="Gene3D" id="1.20.1070.10">
    <property type="entry name" value="Rhodopsin 7-helix transmembrane proteins"/>
    <property type="match status" value="1"/>
</dbReference>
<dbReference type="InterPro" id="IPR000276">
    <property type="entry name" value="GPCR_Rhodpsn"/>
</dbReference>
<dbReference type="InterPro" id="IPR017452">
    <property type="entry name" value="GPCR_Rhodpsn_7TM"/>
</dbReference>
<dbReference type="InterPro" id="IPR000725">
    <property type="entry name" value="Olfact_rcpt"/>
</dbReference>
<dbReference type="PANTHER" id="PTHR26453">
    <property type="entry name" value="OLFACTORY RECEPTOR"/>
    <property type="match status" value="1"/>
</dbReference>
<dbReference type="Pfam" id="PF13853">
    <property type="entry name" value="7tm_4"/>
    <property type="match status" value="1"/>
</dbReference>
<dbReference type="PRINTS" id="PR00237">
    <property type="entry name" value="GPCRRHODOPSN"/>
</dbReference>
<dbReference type="PRINTS" id="PR00245">
    <property type="entry name" value="OLFACTORYR"/>
</dbReference>
<dbReference type="SUPFAM" id="SSF81321">
    <property type="entry name" value="Family A G protein-coupled receptor-like"/>
    <property type="match status" value="1"/>
</dbReference>
<dbReference type="PROSITE" id="PS00237">
    <property type="entry name" value="G_PROTEIN_RECEP_F1_1"/>
    <property type="match status" value="1"/>
</dbReference>
<dbReference type="PROSITE" id="PS50262">
    <property type="entry name" value="G_PROTEIN_RECEP_F1_2"/>
    <property type="match status" value="1"/>
</dbReference>
<proteinExistence type="evidence at transcript level"/>
<reference key="1">
    <citation type="submission" date="2001-07" db="EMBL/GenBank/DDBJ databases">
        <title>Genome-wide discovery and analysis of human seven transmembrane helix receptor genes.</title>
        <authorList>
            <person name="Suwa M."/>
            <person name="Sato T."/>
            <person name="Okouchi I."/>
            <person name="Arita M."/>
            <person name="Futami K."/>
            <person name="Matsumoto S."/>
            <person name="Tsutsumi S."/>
            <person name="Aburatani H."/>
            <person name="Asai K."/>
            <person name="Akiyama Y."/>
        </authorList>
    </citation>
    <scope>NUCLEOTIDE SEQUENCE [GENOMIC DNA]</scope>
</reference>
<reference key="2">
    <citation type="journal article" date="2004" name="Nature">
        <title>DNA sequence and analysis of human chromosome 9.</title>
        <authorList>
            <person name="Humphray S.J."/>
            <person name="Oliver K."/>
            <person name="Hunt A.R."/>
            <person name="Plumb R.W."/>
            <person name="Loveland J.E."/>
            <person name="Howe K.L."/>
            <person name="Andrews T.D."/>
            <person name="Searle S."/>
            <person name="Hunt S.E."/>
            <person name="Scott C.E."/>
            <person name="Jones M.C."/>
            <person name="Ainscough R."/>
            <person name="Almeida J.P."/>
            <person name="Ambrose K.D."/>
            <person name="Ashwell R.I.S."/>
            <person name="Babbage A.K."/>
            <person name="Babbage S."/>
            <person name="Bagguley C.L."/>
            <person name="Bailey J."/>
            <person name="Banerjee R."/>
            <person name="Barker D.J."/>
            <person name="Barlow K.F."/>
            <person name="Bates K."/>
            <person name="Beasley H."/>
            <person name="Beasley O."/>
            <person name="Bird C.P."/>
            <person name="Bray-Allen S."/>
            <person name="Brown A.J."/>
            <person name="Brown J.Y."/>
            <person name="Burford D."/>
            <person name="Burrill W."/>
            <person name="Burton J."/>
            <person name="Carder C."/>
            <person name="Carter N.P."/>
            <person name="Chapman J.C."/>
            <person name="Chen Y."/>
            <person name="Clarke G."/>
            <person name="Clark S.Y."/>
            <person name="Clee C.M."/>
            <person name="Clegg S."/>
            <person name="Collier R.E."/>
            <person name="Corby N."/>
            <person name="Crosier M."/>
            <person name="Cummings A.T."/>
            <person name="Davies J."/>
            <person name="Dhami P."/>
            <person name="Dunn M."/>
            <person name="Dutta I."/>
            <person name="Dyer L.W."/>
            <person name="Earthrowl M.E."/>
            <person name="Faulkner L."/>
            <person name="Fleming C.J."/>
            <person name="Frankish A."/>
            <person name="Frankland J.A."/>
            <person name="French L."/>
            <person name="Fricker D.G."/>
            <person name="Garner P."/>
            <person name="Garnett J."/>
            <person name="Ghori J."/>
            <person name="Gilbert J.G.R."/>
            <person name="Glison C."/>
            <person name="Grafham D.V."/>
            <person name="Gribble S."/>
            <person name="Griffiths C."/>
            <person name="Griffiths-Jones S."/>
            <person name="Grocock R."/>
            <person name="Guy J."/>
            <person name="Hall R.E."/>
            <person name="Hammond S."/>
            <person name="Harley J.L."/>
            <person name="Harrison E.S.I."/>
            <person name="Hart E.A."/>
            <person name="Heath P.D."/>
            <person name="Henderson C.D."/>
            <person name="Hopkins B.L."/>
            <person name="Howard P.J."/>
            <person name="Howden P.J."/>
            <person name="Huckle E."/>
            <person name="Johnson C."/>
            <person name="Johnson D."/>
            <person name="Joy A.A."/>
            <person name="Kay M."/>
            <person name="Keenan S."/>
            <person name="Kershaw J.K."/>
            <person name="Kimberley A.M."/>
            <person name="King A."/>
            <person name="Knights A."/>
            <person name="Laird G.K."/>
            <person name="Langford C."/>
            <person name="Lawlor S."/>
            <person name="Leongamornlert D.A."/>
            <person name="Leversha M."/>
            <person name="Lloyd C."/>
            <person name="Lloyd D.M."/>
            <person name="Lovell J."/>
            <person name="Martin S."/>
            <person name="Mashreghi-Mohammadi M."/>
            <person name="Matthews L."/>
            <person name="McLaren S."/>
            <person name="McLay K.E."/>
            <person name="McMurray A."/>
            <person name="Milne S."/>
            <person name="Nickerson T."/>
            <person name="Nisbett J."/>
            <person name="Nordsiek G."/>
            <person name="Pearce A.V."/>
            <person name="Peck A.I."/>
            <person name="Porter K.M."/>
            <person name="Pandian R."/>
            <person name="Pelan S."/>
            <person name="Phillimore B."/>
            <person name="Povey S."/>
            <person name="Ramsey Y."/>
            <person name="Rand V."/>
            <person name="Scharfe M."/>
            <person name="Sehra H.K."/>
            <person name="Shownkeen R."/>
            <person name="Sims S.K."/>
            <person name="Skuce C.D."/>
            <person name="Smith M."/>
            <person name="Steward C.A."/>
            <person name="Swarbreck D."/>
            <person name="Sycamore N."/>
            <person name="Tester J."/>
            <person name="Thorpe A."/>
            <person name="Tracey A."/>
            <person name="Tromans A."/>
            <person name="Thomas D.W."/>
            <person name="Wall M."/>
            <person name="Wallis J.M."/>
            <person name="West A.P."/>
            <person name="Whitehead S.L."/>
            <person name="Willey D.L."/>
            <person name="Williams S.A."/>
            <person name="Wilming L."/>
            <person name="Wray P.W."/>
            <person name="Young L."/>
            <person name="Ashurst J.L."/>
            <person name="Coulson A."/>
            <person name="Blocker H."/>
            <person name="Durbin R.M."/>
            <person name="Sulston J.E."/>
            <person name="Hubbard T."/>
            <person name="Jackson M.J."/>
            <person name="Bentley D.R."/>
            <person name="Beck S."/>
            <person name="Rogers J."/>
            <person name="Dunham I."/>
        </authorList>
    </citation>
    <scope>NUCLEOTIDE SEQUENCE [LARGE SCALE GENOMIC DNA]</scope>
</reference>
<reference key="3">
    <citation type="journal article" date="2004" name="Genome Res.">
        <title>The status, quality, and expansion of the NIH full-length cDNA project: the Mammalian Gene Collection (MGC).</title>
        <authorList>
            <consortium name="The MGC Project Team"/>
        </authorList>
    </citation>
    <scope>NUCLEOTIDE SEQUENCE [LARGE SCALE MRNA]</scope>
</reference>
<reference key="4">
    <citation type="journal article" date="2004" name="Proc. Natl. Acad. Sci. U.S.A.">
        <title>The human olfactory receptor gene family.</title>
        <authorList>
            <person name="Malnic B."/>
            <person name="Godfrey P.A."/>
            <person name="Buck L.B."/>
        </authorList>
    </citation>
    <scope>IDENTIFICATION</scope>
</reference>
<reference key="5">
    <citation type="journal article" date="2004" name="Proc. Natl. Acad. Sci. U.S.A.">
        <authorList>
            <person name="Malnic B."/>
            <person name="Godfrey P.A."/>
            <person name="Buck L.B."/>
        </authorList>
    </citation>
    <scope>ERRATUM OF PUBMED:14983052</scope>
</reference>
<evidence type="ECO:0000255" key="1"/>
<evidence type="ECO:0000255" key="2">
    <source>
        <dbReference type="PROSITE-ProRule" id="PRU00521"/>
    </source>
</evidence>
<evidence type="ECO:0000305" key="3"/>
<keyword id="KW-1003">Cell membrane</keyword>
<keyword id="KW-1015">Disulfide bond</keyword>
<keyword id="KW-0297">G-protein coupled receptor</keyword>
<keyword id="KW-0325">Glycoprotein</keyword>
<keyword id="KW-0472">Membrane</keyword>
<keyword id="KW-0552">Olfaction</keyword>
<keyword id="KW-0675">Receptor</keyword>
<keyword id="KW-1185">Reference proteome</keyword>
<keyword id="KW-0716">Sensory transduction</keyword>
<keyword id="KW-0807">Transducer</keyword>
<keyword id="KW-0812">Transmembrane</keyword>
<keyword id="KW-1133">Transmembrane helix</keyword>